<feature type="chain" id="PRO_1000213036" description="ATP synthase gamma chain">
    <location>
        <begin position="1"/>
        <end position="290"/>
    </location>
</feature>
<protein>
    <recommendedName>
        <fullName evidence="1">ATP synthase gamma chain</fullName>
    </recommendedName>
    <alternativeName>
        <fullName evidence="1">ATP synthase F1 sector gamma subunit</fullName>
    </alternativeName>
    <alternativeName>
        <fullName evidence="1">F-ATPase gamma subunit</fullName>
    </alternativeName>
</protein>
<keyword id="KW-0066">ATP synthesis</keyword>
<keyword id="KW-0997">Cell inner membrane</keyword>
<keyword id="KW-1003">Cell membrane</keyword>
<keyword id="KW-0139">CF(1)</keyword>
<keyword id="KW-0375">Hydrogen ion transport</keyword>
<keyword id="KW-0406">Ion transport</keyword>
<keyword id="KW-0472">Membrane</keyword>
<keyword id="KW-1185">Reference proteome</keyword>
<keyword id="KW-0813">Transport</keyword>
<accession>C1A697</accession>
<evidence type="ECO:0000255" key="1">
    <source>
        <dbReference type="HAMAP-Rule" id="MF_00815"/>
    </source>
</evidence>
<sequence length="290" mass="31202">MAKGKELKGRIRSTENTRKITRTMEMVATSKLKRATDRVAAARPYALALGEVLSHVYSPELADRFPLLRRPAAPRTVALVILTANRGLCGAFNANLIKEARSRIAELEAKGLTVELHVVGRKGVGFFRYVNRAIASQRTDITDKPSAADAASLIDGLMQRFAAGSIDAVYITYAKYLSALSAPPATEQVLPVAPPTAKAEGGVQHDFILAPSADAILEALLPLYVRNAVYRALVETEAGFQSAQRTAMKNATDNATELLQVLKRTYNSARQAQITQEIAEIVGGASALQG</sequence>
<gene>
    <name evidence="1" type="primary">atpG</name>
    <name type="ordered locus">GAU_0715</name>
</gene>
<dbReference type="EMBL" id="AP009153">
    <property type="protein sequence ID" value="BAH37757.1"/>
    <property type="molecule type" value="Genomic_DNA"/>
</dbReference>
<dbReference type="RefSeq" id="WP_012682204.1">
    <property type="nucleotide sequence ID" value="NC_012489.1"/>
</dbReference>
<dbReference type="SMR" id="C1A697"/>
<dbReference type="STRING" id="379066.GAU_0715"/>
<dbReference type="KEGG" id="gau:GAU_0715"/>
<dbReference type="eggNOG" id="COG0224">
    <property type="taxonomic scope" value="Bacteria"/>
</dbReference>
<dbReference type="HOGENOM" id="CLU_050669_0_1_0"/>
<dbReference type="OrthoDB" id="9812769at2"/>
<dbReference type="Proteomes" id="UP000002209">
    <property type="component" value="Chromosome"/>
</dbReference>
<dbReference type="GO" id="GO:0005886">
    <property type="term" value="C:plasma membrane"/>
    <property type="evidence" value="ECO:0007669"/>
    <property type="project" value="UniProtKB-SubCell"/>
</dbReference>
<dbReference type="GO" id="GO:0045259">
    <property type="term" value="C:proton-transporting ATP synthase complex"/>
    <property type="evidence" value="ECO:0007669"/>
    <property type="project" value="UniProtKB-KW"/>
</dbReference>
<dbReference type="GO" id="GO:0005524">
    <property type="term" value="F:ATP binding"/>
    <property type="evidence" value="ECO:0007669"/>
    <property type="project" value="UniProtKB-UniRule"/>
</dbReference>
<dbReference type="GO" id="GO:0046933">
    <property type="term" value="F:proton-transporting ATP synthase activity, rotational mechanism"/>
    <property type="evidence" value="ECO:0007669"/>
    <property type="project" value="UniProtKB-UniRule"/>
</dbReference>
<dbReference type="GO" id="GO:0042777">
    <property type="term" value="P:proton motive force-driven plasma membrane ATP synthesis"/>
    <property type="evidence" value="ECO:0007669"/>
    <property type="project" value="UniProtKB-UniRule"/>
</dbReference>
<dbReference type="CDD" id="cd12151">
    <property type="entry name" value="F1-ATPase_gamma"/>
    <property type="match status" value="1"/>
</dbReference>
<dbReference type="Gene3D" id="3.40.1380.10">
    <property type="match status" value="1"/>
</dbReference>
<dbReference type="Gene3D" id="1.10.287.80">
    <property type="entry name" value="ATP synthase, gamma subunit, helix hairpin domain"/>
    <property type="match status" value="1"/>
</dbReference>
<dbReference type="HAMAP" id="MF_00815">
    <property type="entry name" value="ATP_synth_gamma_bact"/>
    <property type="match status" value="1"/>
</dbReference>
<dbReference type="InterPro" id="IPR035968">
    <property type="entry name" value="ATP_synth_F1_ATPase_gsu"/>
</dbReference>
<dbReference type="InterPro" id="IPR000131">
    <property type="entry name" value="ATP_synth_F1_gsu"/>
</dbReference>
<dbReference type="InterPro" id="IPR023632">
    <property type="entry name" value="ATP_synth_F1_gsu_CS"/>
</dbReference>
<dbReference type="NCBIfam" id="TIGR01146">
    <property type="entry name" value="ATPsyn_F1gamma"/>
    <property type="match status" value="1"/>
</dbReference>
<dbReference type="NCBIfam" id="NF009960">
    <property type="entry name" value="PRK13427.1"/>
    <property type="match status" value="1"/>
</dbReference>
<dbReference type="PANTHER" id="PTHR11693">
    <property type="entry name" value="ATP SYNTHASE GAMMA CHAIN"/>
    <property type="match status" value="1"/>
</dbReference>
<dbReference type="PANTHER" id="PTHR11693:SF22">
    <property type="entry name" value="ATP SYNTHASE SUBUNIT GAMMA, MITOCHONDRIAL"/>
    <property type="match status" value="1"/>
</dbReference>
<dbReference type="Pfam" id="PF00231">
    <property type="entry name" value="ATP-synt"/>
    <property type="match status" value="1"/>
</dbReference>
<dbReference type="PRINTS" id="PR00126">
    <property type="entry name" value="ATPASEGAMMA"/>
</dbReference>
<dbReference type="SUPFAM" id="SSF52943">
    <property type="entry name" value="ATP synthase (F1-ATPase), gamma subunit"/>
    <property type="match status" value="1"/>
</dbReference>
<dbReference type="PROSITE" id="PS00153">
    <property type="entry name" value="ATPASE_GAMMA"/>
    <property type="match status" value="1"/>
</dbReference>
<organism>
    <name type="scientific">Gemmatimonas aurantiaca (strain DSM 14586 / JCM 11422 / NBRC 100505 / T-27)</name>
    <dbReference type="NCBI Taxonomy" id="379066"/>
    <lineage>
        <taxon>Bacteria</taxon>
        <taxon>Pseudomonadati</taxon>
        <taxon>Gemmatimonadota</taxon>
        <taxon>Gemmatimonadia</taxon>
        <taxon>Gemmatimonadales</taxon>
        <taxon>Gemmatimonadaceae</taxon>
        <taxon>Gemmatimonas</taxon>
    </lineage>
</organism>
<reference key="1">
    <citation type="submission" date="2006-03" db="EMBL/GenBank/DDBJ databases">
        <title>Complete genome sequence of Gemmatimonas aurantiaca T-27 that represents a novel phylum Gemmatimonadetes.</title>
        <authorList>
            <person name="Takasaki K."/>
            <person name="Ichikawa N."/>
            <person name="Miura H."/>
            <person name="Matsushita S."/>
            <person name="Watanabe Y."/>
            <person name="Oguchi A."/>
            <person name="Ankai A."/>
            <person name="Yashiro I."/>
            <person name="Takahashi M."/>
            <person name="Terui Y."/>
            <person name="Fukui S."/>
            <person name="Yokoyama H."/>
            <person name="Tanikawa S."/>
            <person name="Hanada S."/>
            <person name="Kamagata Y."/>
            <person name="Fujita N."/>
        </authorList>
    </citation>
    <scope>NUCLEOTIDE SEQUENCE [LARGE SCALE GENOMIC DNA]</scope>
    <source>
        <strain>DSM 14586 / JCM 11422 / NBRC 100505 / T-27</strain>
    </source>
</reference>
<name>ATPG_GEMAT</name>
<proteinExistence type="inferred from homology"/>
<comment type="function">
    <text evidence="1">Produces ATP from ADP in the presence of a proton gradient across the membrane. The gamma chain is believed to be important in regulating ATPase activity and the flow of protons through the CF(0) complex.</text>
</comment>
<comment type="subunit">
    <text evidence="1">F-type ATPases have 2 components, CF(1) - the catalytic core - and CF(0) - the membrane proton channel. CF(1) has five subunits: alpha(3), beta(3), gamma(1), delta(1), epsilon(1). CF(0) has three main subunits: a, b and c.</text>
</comment>
<comment type="subcellular location">
    <subcellularLocation>
        <location evidence="1">Cell inner membrane</location>
        <topology evidence="1">Peripheral membrane protein</topology>
    </subcellularLocation>
</comment>
<comment type="similarity">
    <text evidence="1">Belongs to the ATPase gamma chain family.</text>
</comment>